<accession>Q2T2A4</accession>
<protein>
    <recommendedName>
        <fullName evidence="1">7-cyano-7-deazaguanine synthase</fullName>
        <ecNumber evidence="1">6.3.4.20</ecNumber>
    </recommendedName>
    <alternativeName>
        <fullName evidence="1">7-cyano-7-carbaguanine synthase</fullName>
    </alternativeName>
    <alternativeName>
        <fullName evidence="1">PreQ(0) synthase</fullName>
    </alternativeName>
    <alternativeName>
        <fullName evidence="1">Queuosine biosynthesis protein QueC</fullName>
    </alternativeName>
</protein>
<dbReference type="EC" id="6.3.4.20" evidence="1"/>
<dbReference type="EMBL" id="CP000086">
    <property type="protein sequence ID" value="ABC37485.1"/>
    <property type="molecule type" value="Genomic_DNA"/>
</dbReference>
<dbReference type="RefSeq" id="WP_009893630.1">
    <property type="nucleotide sequence ID" value="NZ_CP008785.1"/>
</dbReference>
<dbReference type="SMR" id="Q2T2A4"/>
<dbReference type="GeneID" id="45119909"/>
<dbReference type="KEGG" id="bte:BTH_I0137"/>
<dbReference type="HOGENOM" id="CLU_081854_0_0_4"/>
<dbReference type="UniPathway" id="UPA00391"/>
<dbReference type="Proteomes" id="UP000001930">
    <property type="component" value="Chromosome I"/>
</dbReference>
<dbReference type="GO" id="GO:0005524">
    <property type="term" value="F:ATP binding"/>
    <property type="evidence" value="ECO:0007669"/>
    <property type="project" value="UniProtKB-UniRule"/>
</dbReference>
<dbReference type="GO" id="GO:0016879">
    <property type="term" value="F:ligase activity, forming carbon-nitrogen bonds"/>
    <property type="evidence" value="ECO:0007669"/>
    <property type="project" value="UniProtKB-UniRule"/>
</dbReference>
<dbReference type="GO" id="GO:0008270">
    <property type="term" value="F:zinc ion binding"/>
    <property type="evidence" value="ECO:0007669"/>
    <property type="project" value="UniProtKB-UniRule"/>
</dbReference>
<dbReference type="GO" id="GO:0008616">
    <property type="term" value="P:queuosine biosynthetic process"/>
    <property type="evidence" value="ECO:0007669"/>
    <property type="project" value="UniProtKB-UniRule"/>
</dbReference>
<dbReference type="CDD" id="cd01995">
    <property type="entry name" value="QueC-like"/>
    <property type="match status" value="1"/>
</dbReference>
<dbReference type="Gene3D" id="3.40.50.620">
    <property type="entry name" value="HUPs"/>
    <property type="match status" value="1"/>
</dbReference>
<dbReference type="HAMAP" id="MF_01633">
    <property type="entry name" value="QueC"/>
    <property type="match status" value="1"/>
</dbReference>
<dbReference type="InterPro" id="IPR018317">
    <property type="entry name" value="QueC"/>
</dbReference>
<dbReference type="InterPro" id="IPR014729">
    <property type="entry name" value="Rossmann-like_a/b/a_fold"/>
</dbReference>
<dbReference type="NCBIfam" id="TIGR00364">
    <property type="entry name" value="7-cyano-7-deazaguanine synthase QueC"/>
    <property type="match status" value="1"/>
</dbReference>
<dbReference type="PANTHER" id="PTHR42914">
    <property type="entry name" value="7-CYANO-7-DEAZAGUANINE SYNTHASE"/>
    <property type="match status" value="1"/>
</dbReference>
<dbReference type="PANTHER" id="PTHR42914:SF1">
    <property type="entry name" value="7-CYANO-7-DEAZAGUANINE SYNTHASE"/>
    <property type="match status" value="1"/>
</dbReference>
<dbReference type="Pfam" id="PF06508">
    <property type="entry name" value="QueC"/>
    <property type="match status" value="1"/>
</dbReference>
<dbReference type="PIRSF" id="PIRSF006293">
    <property type="entry name" value="ExsB"/>
    <property type="match status" value="1"/>
</dbReference>
<dbReference type="SUPFAM" id="SSF52402">
    <property type="entry name" value="Adenine nucleotide alpha hydrolases-like"/>
    <property type="match status" value="1"/>
</dbReference>
<reference key="1">
    <citation type="journal article" date="2005" name="BMC Genomics">
        <title>Bacterial genome adaptation to niches: divergence of the potential virulence genes in three Burkholderia species of different survival strategies.</title>
        <authorList>
            <person name="Kim H.S."/>
            <person name="Schell M.A."/>
            <person name="Yu Y."/>
            <person name="Ulrich R.L."/>
            <person name="Sarria S.H."/>
            <person name="Nierman W.C."/>
            <person name="DeShazer D."/>
        </authorList>
    </citation>
    <scope>NUCLEOTIDE SEQUENCE [LARGE SCALE GENOMIC DNA]</scope>
    <source>
        <strain>ATCC 700388 / DSM 13276 / CCUG 48851 / CIP 106301 / E264</strain>
    </source>
</reference>
<proteinExistence type="inferred from homology"/>
<gene>
    <name evidence="1" type="primary">queC</name>
    <name type="ordered locus">BTH_I0137</name>
</gene>
<feature type="chain" id="PRO_0000246821" description="7-cyano-7-deazaguanine synthase">
    <location>
        <begin position="1"/>
        <end position="244"/>
    </location>
</feature>
<feature type="binding site" evidence="1">
    <location>
        <begin position="14"/>
        <end position="24"/>
    </location>
    <ligand>
        <name>ATP</name>
        <dbReference type="ChEBI" id="CHEBI:30616"/>
    </ligand>
</feature>
<feature type="binding site" evidence="1">
    <location>
        <position position="202"/>
    </location>
    <ligand>
        <name>Zn(2+)</name>
        <dbReference type="ChEBI" id="CHEBI:29105"/>
    </ligand>
</feature>
<feature type="binding site" evidence="1">
    <location>
        <position position="217"/>
    </location>
    <ligand>
        <name>Zn(2+)</name>
        <dbReference type="ChEBI" id="CHEBI:29105"/>
    </ligand>
</feature>
<feature type="binding site" evidence="1">
    <location>
        <position position="220"/>
    </location>
    <ligand>
        <name>Zn(2+)</name>
        <dbReference type="ChEBI" id="CHEBI:29105"/>
    </ligand>
</feature>
<feature type="binding site" evidence="1">
    <location>
        <position position="223"/>
    </location>
    <ligand>
        <name>Zn(2+)</name>
        <dbReference type="ChEBI" id="CHEBI:29105"/>
    </ligand>
</feature>
<sequence length="244" mass="27212">MIRTDAKDGALVLFSGGQDSATCVAWALERYQTVETLGFDYGQRHRVELECREGVRDALKRRFPQWSHKLGDDHMIDLSVLGAISDTAMTRAIEIETASNGLPNTFVPGRNLLFMTIGAAIAYRRGLRALVGGMCETDFSGYPDCRDDTMKALQVALNLGMDTRFVLETPLMWLDKADTWRLAEQLGGKPLVELIRVETHTCYVGERSELHDWGFGCGECPACKLRKRGFEAYLRGESVTQAPV</sequence>
<keyword id="KW-0067">ATP-binding</keyword>
<keyword id="KW-0436">Ligase</keyword>
<keyword id="KW-0479">Metal-binding</keyword>
<keyword id="KW-0547">Nucleotide-binding</keyword>
<keyword id="KW-0671">Queuosine biosynthesis</keyword>
<keyword id="KW-0862">Zinc</keyword>
<organism>
    <name type="scientific">Burkholderia thailandensis (strain ATCC 700388 / DSM 13276 / CCUG 48851 / CIP 106301 / E264)</name>
    <dbReference type="NCBI Taxonomy" id="271848"/>
    <lineage>
        <taxon>Bacteria</taxon>
        <taxon>Pseudomonadati</taxon>
        <taxon>Pseudomonadota</taxon>
        <taxon>Betaproteobacteria</taxon>
        <taxon>Burkholderiales</taxon>
        <taxon>Burkholderiaceae</taxon>
        <taxon>Burkholderia</taxon>
        <taxon>pseudomallei group</taxon>
    </lineage>
</organism>
<name>QUEC_BURTA</name>
<evidence type="ECO:0000255" key="1">
    <source>
        <dbReference type="HAMAP-Rule" id="MF_01633"/>
    </source>
</evidence>
<comment type="function">
    <text evidence="1">Catalyzes the ATP-dependent conversion of 7-carboxy-7-deazaguanine (CDG) to 7-cyano-7-deazaguanine (preQ(0)).</text>
</comment>
<comment type="catalytic activity">
    <reaction evidence="1">
        <text>7-carboxy-7-deazaguanine + NH4(+) + ATP = 7-cyano-7-deazaguanine + ADP + phosphate + H2O + H(+)</text>
        <dbReference type="Rhea" id="RHEA:27982"/>
        <dbReference type="ChEBI" id="CHEBI:15377"/>
        <dbReference type="ChEBI" id="CHEBI:15378"/>
        <dbReference type="ChEBI" id="CHEBI:28938"/>
        <dbReference type="ChEBI" id="CHEBI:30616"/>
        <dbReference type="ChEBI" id="CHEBI:43474"/>
        <dbReference type="ChEBI" id="CHEBI:45075"/>
        <dbReference type="ChEBI" id="CHEBI:61036"/>
        <dbReference type="ChEBI" id="CHEBI:456216"/>
        <dbReference type="EC" id="6.3.4.20"/>
    </reaction>
</comment>
<comment type="cofactor">
    <cofactor evidence="1">
        <name>Zn(2+)</name>
        <dbReference type="ChEBI" id="CHEBI:29105"/>
    </cofactor>
    <text evidence="1">Binds 1 zinc ion per subunit.</text>
</comment>
<comment type="pathway">
    <text evidence="1">Purine metabolism; 7-cyano-7-deazaguanine biosynthesis.</text>
</comment>
<comment type="similarity">
    <text evidence="1">Belongs to the QueC family.</text>
</comment>